<name>PYRD_GLOVI</name>
<protein>
    <recommendedName>
        <fullName evidence="1">Dihydroorotate dehydrogenase (quinone)</fullName>
        <ecNumber evidence="1">1.3.5.2</ecNumber>
    </recommendedName>
    <alternativeName>
        <fullName evidence="1">DHOdehase</fullName>
        <shortName evidence="1">DHOD</shortName>
        <shortName evidence="1">DHODase</shortName>
    </alternativeName>
    <alternativeName>
        <fullName evidence="1">Dihydroorotate oxidase</fullName>
    </alternativeName>
</protein>
<feature type="chain" id="PRO_0000148442" description="Dihydroorotate dehydrogenase (quinone)">
    <location>
        <begin position="1"/>
        <end position="353"/>
    </location>
</feature>
<feature type="active site" description="Nucleophile" evidence="1">
    <location>
        <position position="180"/>
    </location>
</feature>
<feature type="binding site" evidence="1">
    <location>
        <begin position="67"/>
        <end position="71"/>
    </location>
    <ligand>
        <name>FMN</name>
        <dbReference type="ChEBI" id="CHEBI:58210"/>
    </ligand>
</feature>
<feature type="binding site" evidence="1">
    <location>
        <position position="71"/>
    </location>
    <ligand>
        <name>substrate</name>
    </ligand>
</feature>
<feature type="binding site" evidence="1">
    <location>
        <position position="91"/>
    </location>
    <ligand>
        <name>FMN</name>
        <dbReference type="ChEBI" id="CHEBI:58210"/>
    </ligand>
</feature>
<feature type="binding site" evidence="1">
    <location>
        <begin position="116"/>
        <end position="120"/>
    </location>
    <ligand>
        <name>substrate</name>
    </ligand>
</feature>
<feature type="binding site" evidence="1">
    <location>
        <position position="144"/>
    </location>
    <ligand>
        <name>FMN</name>
        <dbReference type="ChEBI" id="CHEBI:58210"/>
    </ligand>
</feature>
<feature type="binding site" evidence="1">
    <location>
        <position position="177"/>
    </location>
    <ligand>
        <name>FMN</name>
        <dbReference type="ChEBI" id="CHEBI:58210"/>
    </ligand>
</feature>
<feature type="binding site" evidence="1">
    <location>
        <position position="177"/>
    </location>
    <ligand>
        <name>substrate</name>
    </ligand>
</feature>
<feature type="binding site" evidence="1">
    <location>
        <position position="182"/>
    </location>
    <ligand>
        <name>substrate</name>
    </ligand>
</feature>
<feature type="binding site" evidence="1">
    <location>
        <position position="215"/>
    </location>
    <ligand>
        <name>FMN</name>
        <dbReference type="ChEBI" id="CHEBI:58210"/>
    </ligand>
</feature>
<feature type="binding site" evidence="1">
    <location>
        <position position="243"/>
    </location>
    <ligand>
        <name>FMN</name>
        <dbReference type="ChEBI" id="CHEBI:58210"/>
    </ligand>
</feature>
<feature type="binding site" evidence="1">
    <location>
        <begin position="244"/>
        <end position="245"/>
    </location>
    <ligand>
        <name>substrate</name>
    </ligand>
</feature>
<feature type="binding site" evidence="1">
    <location>
        <position position="264"/>
    </location>
    <ligand>
        <name>FMN</name>
        <dbReference type="ChEBI" id="CHEBI:58210"/>
    </ligand>
</feature>
<feature type="binding site" evidence="1">
    <location>
        <position position="293"/>
    </location>
    <ligand>
        <name>FMN</name>
        <dbReference type="ChEBI" id="CHEBI:58210"/>
    </ligand>
</feature>
<feature type="binding site" evidence="1">
    <location>
        <begin position="314"/>
        <end position="315"/>
    </location>
    <ligand>
        <name>FMN</name>
        <dbReference type="ChEBI" id="CHEBI:58210"/>
    </ligand>
</feature>
<dbReference type="EC" id="1.3.5.2" evidence="1"/>
<dbReference type="EMBL" id="BA000045">
    <property type="protein sequence ID" value="BAC91021.1"/>
    <property type="molecule type" value="Genomic_DNA"/>
</dbReference>
<dbReference type="RefSeq" id="NP_926026.1">
    <property type="nucleotide sequence ID" value="NC_005125.1"/>
</dbReference>
<dbReference type="RefSeq" id="WP_011143073.1">
    <property type="nucleotide sequence ID" value="NC_005125.1"/>
</dbReference>
<dbReference type="SMR" id="Q7NC99"/>
<dbReference type="FunCoup" id="Q7NC99">
    <property type="interactions" value="309"/>
</dbReference>
<dbReference type="STRING" id="251221.gene:10760585"/>
<dbReference type="EnsemblBacteria" id="BAC91021">
    <property type="protein sequence ID" value="BAC91021"/>
    <property type="gene ID" value="BAC91021"/>
</dbReference>
<dbReference type="KEGG" id="gvi:gll3080"/>
<dbReference type="PATRIC" id="fig|251221.4.peg.3109"/>
<dbReference type="eggNOG" id="COG0167">
    <property type="taxonomic scope" value="Bacteria"/>
</dbReference>
<dbReference type="HOGENOM" id="CLU_013640_2_0_3"/>
<dbReference type="InParanoid" id="Q7NC99"/>
<dbReference type="OrthoDB" id="9802377at2"/>
<dbReference type="PhylomeDB" id="Q7NC99"/>
<dbReference type="UniPathway" id="UPA00070">
    <property type="reaction ID" value="UER00946"/>
</dbReference>
<dbReference type="Proteomes" id="UP000000557">
    <property type="component" value="Chromosome"/>
</dbReference>
<dbReference type="GO" id="GO:0005737">
    <property type="term" value="C:cytoplasm"/>
    <property type="evidence" value="ECO:0007669"/>
    <property type="project" value="InterPro"/>
</dbReference>
<dbReference type="GO" id="GO:0005886">
    <property type="term" value="C:plasma membrane"/>
    <property type="evidence" value="ECO:0007669"/>
    <property type="project" value="UniProtKB-SubCell"/>
</dbReference>
<dbReference type="GO" id="GO:0106430">
    <property type="term" value="F:dihydroorotate dehydrogenase (quinone) activity"/>
    <property type="evidence" value="ECO:0007669"/>
    <property type="project" value="UniProtKB-EC"/>
</dbReference>
<dbReference type="GO" id="GO:0004152">
    <property type="term" value="F:dihydroorotate dehydrogenase activity"/>
    <property type="evidence" value="ECO:0000318"/>
    <property type="project" value="GO_Central"/>
</dbReference>
<dbReference type="GO" id="GO:0006207">
    <property type="term" value="P:'de novo' pyrimidine nucleobase biosynthetic process"/>
    <property type="evidence" value="ECO:0000318"/>
    <property type="project" value="GO_Central"/>
</dbReference>
<dbReference type="GO" id="GO:0044205">
    <property type="term" value="P:'de novo' UMP biosynthetic process"/>
    <property type="evidence" value="ECO:0007669"/>
    <property type="project" value="UniProtKB-UniRule"/>
</dbReference>
<dbReference type="GO" id="GO:0009220">
    <property type="term" value="P:pyrimidine ribonucleotide biosynthetic process"/>
    <property type="evidence" value="ECO:0000318"/>
    <property type="project" value="GO_Central"/>
</dbReference>
<dbReference type="CDD" id="cd04738">
    <property type="entry name" value="DHOD_2_like"/>
    <property type="match status" value="1"/>
</dbReference>
<dbReference type="FunFam" id="3.20.20.70:FF:000123">
    <property type="entry name" value="Dihydroorotate dehydrogenase (quinone)"/>
    <property type="match status" value="1"/>
</dbReference>
<dbReference type="Gene3D" id="3.20.20.70">
    <property type="entry name" value="Aldolase class I"/>
    <property type="match status" value="1"/>
</dbReference>
<dbReference type="HAMAP" id="MF_00225">
    <property type="entry name" value="DHO_dh_type2"/>
    <property type="match status" value="1"/>
</dbReference>
<dbReference type="InterPro" id="IPR013785">
    <property type="entry name" value="Aldolase_TIM"/>
</dbReference>
<dbReference type="InterPro" id="IPR050074">
    <property type="entry name" value="DHO_dehydrogenase"/>
</dbReference>
<dbReference type="InterPro" id="IPR012135">
    <property type="entry name" value="Dihydroorotate_DH_1_2"/>
</dbReference>
<dbReference type="InterPro" id="IPR005719">
    <property type="entry name" value="Dihydroorotate_DH_2"/>
</dbReference>
<dbReference type="InterPro" id="IPR005720">
    <property type="entry name" value="Dihydroorotate_DH_cat"/>
</dbReference>
<dbReference type="InterPro" id="IPR001295">
    <property type="entry name" value="Dihydroorotate_DH_CS"/>
</dbReference>
<dbReference type="NCBIfam" id="NF003645">
    <property type="entry name" value="PRK05286.1-2"/>
    <property type="match status" value="1"/>
</dbReference>
<dbReference type="NCBIfam" id="NF003651">
    <property type="entry name" value="PRK05286.2-4"/>
    <property type="match status" value="1"/>
</dbReference>
<dbReference type="NCBIfam" id="NF003652">
    <property type="entry name" value="PRK05286.2-5"/>
    <property type="match status" value="1"/>
</dbReference>
<dbReference type="NCBIfam" id="TIGR01036">
    <property type="entry name" value="pyrD_sub2"/>
    <property type="match status" value="1"/>
</dbReference>
<dbReference type="PANTHER" id="PTHR48109:SF4">
    <property type="entry name" value="DIHYDROOROTATE DEHYDROGENASE (QUINONE), MITOCHONDRIAL"/>
    <property type="match status" value="1"/>
</dbReference>
<dbReference type="PANTHER" id="PTHR48109">
    <property type="entry name" value="DIHYDROOROTATE DEHYDROGENASE (QUINONE), MITOCHONDRIAL-RELATED"/>
    <property type="match status" value="1"/>
</dbReference>
<dbReference type="Pfam" id="PF01180">
    <property type="entry name" value="DHO_dh"/>
    <property type="match status" value="1"/>
</dbReference>
<dbReference type="PIRSF" id="PIRSF000164">
    <property type="entry name" value="DHO_oxidase"/>
    <property type="match status" value="1"/>
</dbReference>
<dbReference type="SUPFAM" id="SSF51395">
    <property type="entry name" value="FMN-linked oxidoreductases"/>
    <property type="match status" value="1"/>
</dbReference>
<dbReference type="PROSITE" id="PS00911">
    <property type="entry name" value="DHODEHASE_1"/>
    <property type="match status" value="1"/>
</dbReference>
<dbReference type="PROSITE" id="PS00912">
    <property type="entry name" value="DHODEHASE_2"/>
    <property type="match status" value="1"/>
</dbReference>
<reference key="1">
    <citation type="journal article" date="2003" name="DNA Res.">
        <title>Complete genome structure of Gloeobacter violaceus PCC 7421, a cyanobacterium that lacks thylakoids.</title>
        <authorList>
            <person name="Nakamura Y."/>
            <person name="Kaneko T."/>
            <person name="Sato S."/>
            <person name="Mimuro M."/>
            <person name="Miyashita H."/>
            <person name="Tsuchiya T."/>
            <person name="Sasamoto S."/>
            <person name="Watanabe A."/>
            <person name="Kawashima K."/>
            <person name="Kishida Y."/>
            <person name="Kiyokawa C."/>
            <person name="Kohara M."/>
            <person name="Matsumoto M."/>
            <person name="Matsuno A."/>
            <person name="Nakazaki N."/>
            <person name="Shimpo S."/>
            <person name="Takeuchi C."/>
            <person name="Yamada M."/>
            <person name="Tabata S."/>
        </authorList>
    </citation>
    <scope>NUCLEOTIDE SEQUENCE [LARGE SCALE GENOMIC DNA]</scope>
    <source>
        <strain>ATCC 29082 / PCC 7421</strain>
    </source>
</reference>
<gene>
    <name evidence="1" type="primary">pyrD</name>
    <name type="ordered locus">gll3080</name>
</gene>
<comment type="function">
    <text evidence="1">Catalyzes the conversion of dihydroorotate to orotate with quinone as electron acceptor.</text>
</comment>
<comment type="catalytic activity">
    <reaction evidence="1">
        <text>(S)-dihydroorotate + a quinone = orotate + a quinol</text>
        <dbReference type="Rhea" id="RHEA:30187"/>
        <dbReference type="ChEBI" id="CHEBI:24646"/>
        <dbReference type="ChEBI" id="CHEBI:30839"/>
        <dbReference type="ChEBI" id="CHEBI:30864"/>
        <dbReference type="ChEBI" id="CHEBI:132124"/>
        <dbReference type="EC" id="1.3.5.2"/>
    </reaction>
</comment>
<comment type="cofactor">
    <cofactor evidence="1">
        <name>FMN</name>
        <dbReference type="ChEBI" id="CHEBI:58210"/>
    </cofactor>
    <text evidence="1">Binds 1 FMN per subunit.</text>
</comment>
<comment type="pathway">
    <text evidence="1">Pyrimidine metabolism; UMP biosynthesis via de novo pathway; orotate from (S)-dihydroorotate (quinone route): step 1/1.</text>
</comment>
<comment type="subunit">
    <text evidence="1">Monomer.</text>
</comment>
<comment type="subcellular location">
    <subcellularLocation>
        <location evidence="1">Cell membrane</location>
        <topology evidence="1">Peripheral membrane protein</topology>
    </subcellularLocation>
</comment>
<comment type="similarity">
    <text evidence="1">Belongs to the dihydroorotate dehydrogenase family. Type 2 subfamily.</text>
</comment>
<accession>Q7NC99</accession>
<proteinExistence type="inferred from homology"/>
<sequence length="353" mass="38641">MDLYRLARPLLFRADPEDAHRRALGALAWAAEQLWAGWLDSVFGYPDPRLEVKLWGLSFANPLGLAAGFDKNAEAVGAWEHLGFGFAEVGTVTRHAQPGNPRPRLFRLPADQAAINRMGFNNDGADALALRLAGRRWGIPIGINLGKSKVTPLEQASDDYLYSFERLYHLGDYFVVNVSSPNTPGLRELQQADRLGEILARLQCANRESKPLLVKIAPDLGWDAVDAVVDLCGEHRLAGVIATNTTIARSGLRSDLQETGGLSGAPLRNRSTEVIGHIWGRTRGQLPIVGVGGIFSGEDAWEKIAHGASLLQVYTGWIYEGPWMVRRILASLATRLERSGFEHLQQATGCAFS</sequence>
<evidence type="ECO:0000255" key="1">
    <source>
        <dbReference type="HAMAP-Rule" id="MF_00225"/>
    </source>
</evidence>
<keyword id="KW-1003">Cell membrane</keyword>
<keyword id="KW-0285">Flavoprotein</keyword>
<keyword id="KW-0288">FMN</keyword>
<keyword id="KW-0472">Membrane</keyword>
<keyword id="KW-0560">Oxidoreductase</keyword>
<keyword id="KW-0665">Pyrimidine biosynthesis</keyword>
<keyword id="KW-1185">Reference proteome</keyword>
<organism>
    <name type="scientific">Gloeobacter violaceus (strain ATCC 29082 / PCC 7421)</name>
    <dbReference type="NCBI Taxonomy" id="251221"/>
    <lineage>
        <taxon>Bacteria</taxon>
        <taxon>Bacillati</taxon>
        <taxon>Cyanobacteriota</taxon>
        <taxon>Cyanophyceae</taxon>
        <taxon>Gloeobacterales</taxon>
        <taxon>Gloeobacteraceae</taxon>
        <taxon>Gloeobacter</taxon>
    </lineage>
</organism>